<comment type="function">
    <text evidence="1 7">May be involved in the cytoskeletal organization of neuronal growth cones. Seems to be inactive as a PPIase (By similarity). Involved in the transport of early endosomes at the level of transition between microfilament-based and microtubule-based movement.</text>
</comment>
<comment type="subunit">
    <text evidence="7 8">Interacts with WIP and actin (PubMed:19121306). Interacts with TBC1D23 (PubMed:29084197).</text>
</comment>
<comment type="interaction">
    <interactant intactId="EBI-5235934">
        <id>Q5T1M5</id>
    </interactant>
    <interactant intactId="EBI-8334188">
        <id>Q9QZ88</id>
        <label>Vps29</label>
    </interactant>
    <organismsDiffer>true</organismsDiffer>
    <experiments>7</experiments>
</comment>
<comment type="interaction">
    <interactant intactId="EBI-5235934">
        <id>Q5T1M5</id>
    </interactant>
    <interactant intactId="EBI-775825">
        <id>Q9EQH3</id>
        <label>Vps35</label>
    </interactant>
    <organismsDiffer>true</organismsDiffer>
    <experiments>3</experiments>
</comment>
<comment type="subcellular location">
    <subcellularLocation>
        <location evidence="2">Cytoplasm</location>
    </subcellularLocation>
    <subcellularLocation>
        <location evidence="2">Cell projection</location>
        <location evidence="2">Axon</location>
    </subcellularLocation>
    <subcellularLocation>
        <location evidence="7">Early endosome</location>
    </subcellularLocation>
    <text evidence="2">Present in axons and neuronal growth cones.</text>
</comment>
<comment type="alternative products">
    <event type="alternative splicing"/>
    <isoform>
        <id>Q5T1M5-1</id>
        <name>1</name>
        <sequence type="displayed"/>
    </isoform>
    <isoform>
        <id>Q5T1M5-2</id>
        <name>2</name>
        <sequence type="described" ref="VSP_027758"/>
    </isoform>
    <isoform>
        <id>Q5T1M5-3</id>
        <name>3</name>
        <sequence type="described" ref="VSP_027756 VSP_027757"/>
    </isoform>
</comment>
<comment type="domain">
    <text evidence="1">The PPIase FKBP-type domain seems to be inactive both for FK506-binding and enzymatic activity.</text>
</comment>
<comment type="domain">
    <text>The central coiled-coil region is responsible for association with early endosomes.</text>
</comment>
<comment type="similarity">
    <text evidence="11">Belongs to the FKBP-type PPIase family.</text>
</comment>
<comment type="sequence caution" evidence="11">
    <conflict type="erroneous initiation">
        <sequence resource="EMBL-CDS" id="AAH09609"/>
    </conflict>
</comment>
<comment type="sequence caution" evidence="11">
    <conflict type="erroneous initiation">
        <sequence resource="EMBL-CDS" id="BAA31649"/>
    </conflict>
</comment>
<dbReference type="EMBL" id="AB014574">
    <property type="protein sequence ID" value="BAA31649.1"/>
    <property type="status" value="ALT_INIT"/>
    <property type="molecule type" value="mRNA"/>
</dbReference>
<dbReference type="EMBL" id="AL449105">
    <property type="status" value="NOT_ANNOTATED_CDS"/>
    <property type="molecule type" value="Genomic_DNA"/>
</dbReference>
<dbReference type="EMBL" id="AL449305">
    <property type="status" value="NOT_ANNOTATED_CDS"/>
    <property type="molecule type" value="Genomic_DNA"/>
</dbReference>
<dbReference type="EMBL" id="BC009609">
    <property type="protein sequence ID" value="AAH09609.1"/>
    <property type="status" value="ALT_INIT"/>
    <property type="molecule type" value="mRNA"/>
</dbReference>
<dbReference type="EMBL" id="BC077732">
    <property type="protein sequence ID" value="AAH77732.1"/>
    <property type="molecule type" value="mRNA"/>
</dbReference>
<dbReference type="CCDS" id="CCDS48007.1">
    <molecule id="Q5T1M5-1"/>
</dbReference>
<dbReference type="PIR" id="T00363">
    <property type="entry name" value="T00363"/>
</dbReference>
<dbReference type="RefSeq" id="NP_056073.1">
    <molecule id="Q5T1M5-1"/>
    <property type="nucleotide sequence ID" value="NM_015258.2"/>
</dbReference>
<dbReference type="RefSeq" id="XP_006717081.1">
    <molecule id="Q5T1M5-2"/>
    <property type="nucleotide sequence ID" value="XM_006717018.3"/>
</dbReference>
<dbReference type="RefSeq" id="XP_054218510.1">
    <molecule id="Q5T1M5-2"/>
    <property type="nucleotide sequence ID" value="XM_054362535.1"/>
</dbReference>
<dbReference type="SMR" id="Q5T1M5"/>
<dbReference type="BioGRID" id="116899">
    <property type="interactions" value="110"/>
</dbReference>
<dbReference type="CORUM" id="Q5T1M5"/>
<dbReference type="FunCoup" id="Q5T1M5">
    <property type="interactions" value="925"/>
</dbReference>
<dbReference type="IntAct" id="Q5T1M5">
    <property type="interactions" value="51"/>
</dbReference>
<dbReference type="MINT" id="Q5T1M5"/>
<dbReference type="STRING" id="9606.ENSP00000416158"/>
<dbReference type="CarbonylDB" id="Q5T1M5"/>
<dbReference type="GlyCosmos" id="Q5T1M5">
    <property type="glycosylation" value="1 site, 1 glycan"/>
</dbReference>
<dbReference type="GlyGen" id="Q5T1M5">
    <property type="glycosylation" value="5 sites, 1 O-linked glycan (4 sites)"/>
</dbReference>
<dbReference type="iPTMnet" id="Q5T1M5"/>
<dbReference type="MetOSite" id="Q5T1M5"/>
<dbReference type="PhosphoSitePlus" id="Q5T1M5"/>
<dbReference type="BioMuta" id="FKBP15"/>
<dbReference type="DMDM" id="158563913"/>
<dbReference type="jPOST" id="Q5T1M5"/>
<dbReference type="MassIVE" id="Q5T1M5"/>
<dbReference type="PaxDb" id="9606-ENSP00000238256"/>
<dbReference type="PeptideAtlas" id="Q5T1M5"/>
<dbReference type="ProteomicsDB" id="64271">
    <molecule id="Q5T1M5-1"/>
</dbReference>
<dbReference type="ProteomicsDB" id="64272">
    <molecule id="Q5T1M5-2"/>
</dbReference>
<dbReference type="ProteomicsDB" id="64273">
    <molecule id="Q5T1M5-3"/>
</dbReference>
<dbReference type="Pumba" id="Q5T1M5"/>
<dbReference type="Antibodypedia" id="1961">
    <property type="antibodies" value="104 antibodies from 23 providers"/>
</dbReference>
<dbReference type="DNASU" id="23307"/>
<dbReference type="Ensembl" id="ENST00000238256.8">
    <molecule id="Q5T1M5-1"/>
    <property type="protein sequence ID" value="ENSP00000238256.3"/>
    <property type="gene ID" value="ENSG00000119321.10"/>
</dbReference>
<dbReference type="Ensembl" id="ENST00000414250.2">
    <molecule id="Q5T1M5-3"/>
    <property type="protein sequence ID" value="ENSP00000415733.2"/>
    <property type="gene ID" value="ENSG00000119321.10"/>
</dbReference>
<dbReference type="Ensembl" id="ENST00000446284.6">
    <molecule id="Q5T1M5-1"/>
    <property type="protein sequence ID" value="ENSP00000416158.2"/>
    <property type="gene ID" value="ENSG00000119321.10"/>
</dbReference>
<dbReference type="GeneID" id="23307"/>
<dbReference type="KEGG" id="hsa:23307"/>
<dbReference type="MANE-Select" id="ENST00000238256.8">
    <property type="protein sequence ID" value="ENSP00000238256.3"/>
    <property type="RefSeq nucleotide sequence ID" value="NM_015258.2"/>
    <property type="RefSeq protein sequence ID" value="NP_056073.1"/>
</dbReference>
<dbReference type="UCSC" id="uc004bgs.3">
    <molecule id="Q5T1M5-1"/>
    <property type="organism name" value="human"/>
</dbReference>
<dbReference type="AGR" id="HGNC:23397"/>
<dbReference type="CTD" id="23307"/>
<dbReference type="GeneCards" id="FKBP15"/>
<dbReference type="HGNC" id="HGNC:23397">
    <property type="gene designation" value="FKBP15"/>
</dbReference>
<dbReference type="HPA" id="ENSG00000119321">
    <property type="expression patterns" value="Low tissue specificity"/>
</dbReference>
<dbReference type="MIM" id="617398">
    <property type="type" value="gene"/>
</dbReference>
<dbReference type="neXtProt" id="NX_Q5T1M5"/>
<dbReference type="OpenTargets" id="ENSG00000119321"/>
<dbReference type="PharmGKB" id="PA162388608"/>
<dbReference type="VEuPathDB" id="HostDB:ENSG00000119321"/>
<dbReference type="eggNOG" id="KOG0552">
    <property type="taxonomic scope" value="Eukaryota"/>
</dbReference>
<dbReference type="eggNOG" id="KOG4725">
    <property type="taxonomic scope" value="Eukaryota"/>
</dbReference>
<dbReference type="GeneTree" id="ENSGT00530000064286"/>
<dbReference type="HOGENOM" id="CLU_007194_1_0_1"/>
<dbReference type="InParanoid" id="Q5T1M5"/>
<dbReference type="OMA" id="VALKAHY"/>
<dbReference type="OrthoDB" id="77911at2759"/>
<dbReference type="PAN-GO" id="Q5T1M5">
    <property type="GO annotations" value="1 GO annotation based on evolutionary models"/>
</dbReference>
<dbReference type="PhylomeDB" id="Q5T1M5"/>
<dbReference type="TreeFam" id="TF328592"/>
<dbReference type="PathwayCommons" id="Q5T1M5"/>
<dbReference type="SignaLink" id="Q5T1M5"/>
<dbReference type="SIGNOR" id="Q5T1M5"/>
<dbReference type="BioGRID-ORCS" id="23307">
    <property type="hits" value="14 hits in 1095 CRISPR screens"/>
</dbReference>
<dbReference type="CD-CODE" id="D212AE19">
    <property type="entry name" value="Synthetic Condensate 000305"/>
</dbReference>
<dbReference type="CD-CODE" id="FB4E32DD">
    <property type="entry name" value="Presynaptic clusters and postsynaptic densities"/>
</dbReference>
<dbReference type="ChiTaRS" id="FKBP15">
    <property type="organism name" value="human"/>
</dbReference>
<dbReference type="GenomeRNAi" id="23307"/>
<dbReference type="Pharos" id="Q5T1M5">
    <property type="development level" value="Tbio"/>
</dbReference>
<dbReference type="PRO" id="PR:Q5T1M5"/>
<dbReference type="Proteomes" id="UP000005640">
    <property type="component" value="Chromosome 9"/>
</dbReference>
<dbReference type="RNAct" id="Q5T1M5">
    <property type="molecule type" value="protein"/>
</dbReference>
<dbReference type="Bgee" id="ENSG00000119321">
    <property type="expression patterns" value="Expressed in monocyte and 212 other cell types or tissues"/>
</dbReference>
<dbReference type="GO" id="GO:0015629">
    <property type="term" value="C:actin cytoskeleton"/>
    <property type="evidence" value="ECO:0007669"/>
    <property type="project" value="Ensembl"/>
</dbReference>
<dbReference type="GO" id="GO:0005769">
    <property type="term" value="C:early endosome"/>
    <property type="evidence" value="ECO:0007669"/>
    <property type="project" value="UniProtKB-SubCell"/>
</dbReference>
<dbReference type="GO" id="GO:0030426">
    <property type="term" value="C:growth cone"/>
    <property type="evidence" value="ECO:0000318"/>
    <property type="project" value="GO_Central"/>
</dbReference>
<dbReference type="GO" id="GO:0016020">
    <property type="term" value="C:membrane"/>
    <property type="evidence" value="ECO:0000314"/>
    <property type="project" value="UniProtKB"/>
</dbReference>
<dbReference type="GO" id="GO:0003779">
    <property type="term" value="F:actin binding"/>
    <property type="evidence" value="ECO:0007669"/>
    <property type="project" value="UniProtKB-KW"/>
</dbReference>
<dbReference type="GO" id="GO:0003755">
    <property type="term" value="F:peptidyl-prolyl cis-trans isomerase activity"/>
    <property type="evidence" value="ECO:0007669"/>
    <property type="project" value="InterPro"/>
</dbReference>
<dbReference type="GO" id="GO:0006897">
    <property type="term" value="P:endocytosis"/>
    <property type="evidence" value="ECO:0007669"/>
    <property type="project" value="UniProtKB-KW"/>
</dbReference>
<dbReference type="FunFam" id="3.10.50.40:FF:000020">
    <property type="entry name" value="Peptidylprolyl isomerase"/>
    <property type="match status" value="1"/>
</dbReference>
<dbReference type="Gene3D" id="3.10.50.40">
    <property type="match status" value="1"/>
</dbReference>
<dbReference type="InterPro" id="IPR056598">
    <property type="entry name" value="FKBP-15_dom"/>
</dbReference>
<dbReference type="InterPro" id="IPR046357">
    <property type="entry name" value="PPIase_dom_sf"/>
</dbReference>
<dbReference type="InterPro" id="IPR001179">
    <property type="entry name" value="PPIase_FKBP_dom"/>
</dbReference>
<dbReference type="PANTHER" id="PTHR44927">
    <property type="entry name" value="FK506-BINDING PROTEIN 15"/>
    <property type="match status" value="1"/>
</dbReference>
<dbReference type="PANTHER" id="PTHR44927:SF1">
    <property type="entry name" value="FK506-BINDING PROTEIN 15"/>
    <property type="match status" value="1"/>
</dbReference>
<dbReference type="Pfam" id="PF23649">
    <property type="entry name" value="FKBP15"/>
    <property type="match status" value="1"/>
</dbReference>
<dbReference type="Pfam" id="PF00254">
    <property type="entry name" value="FKBP_C"/>
    <property type="match status" value="1"/>
</dbReference>
<dbReference type="SUPFAM" id="SSF54534">
    <property type="entry name" value="FKBP-like"/>
    <property type="match status" value="1"/>
</dbReference>
<dbReference type="PROSITE" id="PS50059">
    <property type="entry name" value="FKBP_PPIASE"/>
    <property type="match status" value="1"/>
</dbReference>
<organism>
    <name type="scientific">Homo sapiens</name>
    <name type="common">Human</name>
    <dbReference type="NCBI Taxonomy" id="9606"/>
    <lineage>
        <taxon>Eukaryota</taxon>
        <taxon>Metazoa</taxon>
        <taxon>Chordata</taxon>
        <taxon>Craniata</taxon>
        <taxon>Vertebrata</taxon>
        <taxon>Euteleostomi</taxon>
        <taxon>Mammalia</taxon>
        <taxon>Eutheria</taxon>
        <taxon>Euarchontoglires</taxon>
        <taxon>Primates</taxon>
        <taxon>Haplorrhini</taxon>
        <taxon>Catarrhini</taxon>
        <taxon>Hominidae</taxon>
        <taxon>Homo</taxon>
    </lineage>
</organism>
<keyword id="KW-0007">Acetylation</keyword>
<keyword id="KW-0009">Actin-binding</keyword>
<keyword id="KW-0025">Alternative splicing</keyword>
<keyword id="KW-0966">Cell projection</keyword>
<keyword id="KW-0175">Coiled coil</keyword>
<keyword id="KW-0963">Cytoplasm</keyword>
<keyword id="KW-0254">Endocytosis</keyword>
<keyword id="KW-0967">Endosome</keyword>
<keyword id="KW-0597">Phosphoprotein</keyword>
<keyword id="KW-1267">Proteomics identification</keyword>
<keyword id="KW-1185">Reference proteome</keyword>
<keyword id="KW-0813">Transport</keyword>
<feature type="chain" id="PRO_0000299556" description="FK506-binding protein 15">
    <location>
        <begin position="1"/>
        <end position="1219"/>
    </location>
</feature>
<feature type="domain" description="PPIase FKBP-type" evidence="4">
    <location>
        <begin position="197"/>
        <end position="290"/>
    </location>
</feature>
<feature type="region of interest" description="Disordered" evidence="5">
    <location>
        <begin position="41"/>
        <end position="66"/>
    </location>
</feature>
<feature type="region of interest" description="Important for function in growth cone organization" evidence="1">
    <location>
        <begin position="72"/>
        <end position="169"/>
    </location>
</feature>
<feature type="region of interest" description="Disordered" evidence="5">
    <location>
        <begin position="294"/>
        <end position="349"/>
    </location>
</feature>
<feature type="region of interest" description="Disordered" evidence="5">
    <location>
        <begin position="381"/>
        <end position="433"/>
    </location>
</feature>
<feature type="region of interest" description="Disordered" evidence="5">
    <location>
        <begin position="739"/>
        <end position="761"/>
    </location>
</feature>
<feature type="region of interest" description="Disordered" evidence="5">
    <location>
        <begin position="931"/>
        <end position="1219"/>
    </location>
</feature>
<feature type="coiled-coil region" evidence="3">
    <location>
        <begin position="522"/>
        <end position="789"/>
    </location>
</feature>
<feature type="coiled-coil region" evidence="3">
    <location>
        <begin position="818"/>
        <end position="878"/>
    </location>
</feature>
<feature type="coiled-coil region" evidence="3">
    <location>
        <begin position="925"/>
        <end position="951"/>
    </location>
</feature>
<feature type="compositionally biased region" description="Polar residues" evidence="5">
    <location>
        <begin position="53"/>
        <end position="66"/>
    </location>
</feature>
<feature type="compositionally biased region" description="Polar residues" evidence="5">
    <location>
        <begin position="421"/>
        <end position="433"/>
    </location>
</feature>
<feature type="compositionally biased region" description="Low complexity" evidence="5">
    <location>
        <begin position="957"/>
        <end position="971"/>
    </location>
</feature>
<feature type="compositionally biased region" description="Polar residues" evidence="5">
    <location>
        <begin position="1090"/>
        <end position="1100"/>
    </location>
</feature>
<feature type="compositionally biased region" description="Basic and acidic residues" evidence="5">
    <location>
        <begin position="1123"/>
        <end position="1139"/>
    </location>
</feature>
<feature type="compositionally biased region" description="Acidic residues" evidence="5">
    <location>
        <begin position="1207"/>
        <end position="1219"/>
    </location>
</feature>
<feature type="modified residue" description="N-acetylmethionine" evidence="17 19">
    <location>
        <position position="1"/>
    </location>
</feature>
<feature type="modified residue" description="Phosphoserine" evidence="17">
    <location>
        <position position="14"/>
    </location>
</feature>
<feature type="modified residue" description="Phosphoserine" evidence="21">
    <location>
        <position position="23"/>
    </location>
</feature>
<feature type="modified residue" description="N6-acetyllysine" evidence="15">
    <location>
        <position position="92"/>
    </location>
</feature>
<feature type="modified residue" description="Phosphoserine" evidence="2">
    <location>
        <position position="307"/>
    </location>
</feature>
<feature type="modified residue" description="Phosphoserine" evidence="2">
    <location>
        <position position="311"/>
    </location>
</feature>
<feature type="modified residue" description="Phosphoserine" evidence="16">
    <location>
        <position position="326"/>
    </location>
</feature>
<feature type="modified residue" description="Phosphoserine" evidence="20">
    <location>
        <position position="344"/>
    </location>
</feature>
<feature type="modified residue" description="Phosphoserine" evidence="14 20">
    <location>
        <position position="346"/>
    </location>
</feature>
<feature type="modified residue" description="Phosphoserine" evidence="14 16 20">
    <location>
        <position position="356"/>
    </location>
</feature>
<feature type="modified residue" description="Phosphoserine" evidence="2">
    <location>
        <position position="619"/>
    </location>
</feature>
<feature type="modified residue" description="Phosphoserine" evidence="14">
    <location>
        <position position="939"/>
    </location>
</feature>
<feature type="modified residue" description="Phosphoserine" evidence="14">
    <location>
        <position position="940"/>
    </location>
</feature>
<feature type="modified residue" description="Phosphoserine" evidence="14">
    <location>
        <position position="941"/>
    </location>
</feature>
<feature type="modified residue" description="Phosphoserine" evidence="13 14 17 20 21">
    <location>
        <position position="956"/>
    </location>
</feature>
<feature type="modified residue" description="Phosphoserine" evidence="14 21">
    <location>
        <position position="979"/>
    </location>
</feature>
<feature type="modified residue" description="Phosphoserine" evidence="21">
    <location>
        <position position="1024"/>
    </location>
</feature>
<feature type="modified residue" description="Phosphoserine" evidence="2">
    <location>
        <position position="1056"/>
    </location>
</feature>
<feature type="modified residue" description="Phosphoserine" evidence="21">
    <location>
        <position position="1061"/>
    </location>
</feature>
<feature type="modified residue" description="Phosphoserine" evidence="21">
    <location>
        <position position="1065"/>
    </location>
</feature>
<feature type="modified residue" description="Phosphoserine" evidence="21">
    <location>
        <position position="1097"/>
    </location>
</feature>
<feature type="modified residue" description="Phosphothreonine" evidence="21">
    <location>
        <position position="1099"/>
    </location>
</feature>
<feature type="modified residue" description="Phosphoserine" evidence="14 16 17 20 21">
    <location>
        <position position="1114"/>
    </location>
</feature>
<feature type="modified residue" description="Phosphoserine" evidence="21">
    <location>
        <position position="1158"/>
    </location>
</feature>
<feature type="modified residue" description="Phosphoserine" evidence="12">
    <location>
        <position position="1161"/>
    </location>
</feature>
<feature type="modified residue" description="Phosphoserine" evidence="12 20">
    <location>
        <position position="1162"/>
    </location>
</feature>
<feature type="modified residue" description="Phosphoserine" evidence="14 16 17 18 20">
    <location>
        <position position="1164"/>
    </location>
</feature>
<feature type="modified residue" description="Phosphoserine" evidence="16">
    <location>
        <position position="1195"/>
    </location>
</feature>
<feature type="modified residue" description="Phosphothreonine" evidence="16">
    <location>
        <position position="1203"/>
    </location>
</feature>
<feature type="splice variant" id="VSP_027756" description="In isoform 3." evidence="10">
    <original>PYAGMQAYAYP</original>
    <variation>VTFYNRINYIL</variation>
    <location>
        <begin position="462"/>
        <end position="472"/>
    </location>
</feature>
<feature type="splice variant" id="VSP_027757" description="In isoform 3." evidence="10">
    <location>
        <begin position="473"/>
        <end position="1219"/>
    </location>
</feature>
<feature type="splice variant" id="VSP_027758" description="In isoform 2." evidence="10">
    <location>
        <begin position="629"/>
        <end position="638"/>
    </location>
</feature>
<feature type="sequence variant" id="VAR_034851" description="In dbSNP:rs1133618.">
    <original>A</original>
    <variation>T</variation>
    <location>
        <position position="106"/>
    </location>
</feature>
<feature type="sequence variant" id="VAR_034852" description="In dbSNP:rs10435864." evidence="6 9">
    <original>H</original>
    <variation>Q</variation>
    <location>
        <position position="413"/>
    </location>
</feature>
<feature type="sequence variant" id="VAR_034853" description="In dbSNP:rs10465129.">
    <original>L</original>
    <variation>F</variation>
    <location>
        <position position="434"/>
    </location>
</feature>
<feature type="sequence variant" id="VAR_061543" description="In dbSNP:rs1128116.">
    <original>A</original>
    <variation>S</variation>
    <location>
        <position position="847"/>
    </location>
</feature>
<feature type="sequence variant" id="VAR_061544" description="In dbSNP:rs57348436.">
    <original>P</original>
    <variation>T</variation>
    <location>
        <position position="993"/>
    </location>
</feature>
<evidence type="ECO:0000250" key="1"/>
<evidence type="ECO:0000250" key="2">
    <source>
        <dbReference type="UniProtKB" id="Q6P9Q6"/>
    </source>
</evidence>
<evidence type="ECO:0000255" key="3"/>
<evidence type="ECO:0000255" key="4">
    <source>
        <dbReference type="PROSITE-ProRule" id="PRU00277"/>
    </source>
</evidence>
<evidence type="ECO:0000256" key="5">
    <source>
        <dbReference type="SAM" id="MobiDB-lite"/>
    </source>
</evidence>
<evidence type="ECO:0000269" key="6">
    <source>
    </source>
</evidence>
<evidence type="ECO:0000269" key="7">
    <source>
    </source>
</evidence>
<evidence type="ECO:0000269" key="8">
    <source>
    </source>
</evidence>
<evidence type="ECO:0000269" key="9">
    <source>
    </source>
</evidence>
<evidence type="ECO:0000303" key="10">
    <source>
    </source>
</evidence>
<evidence type="ECO:0000305" key="11"/>
<evidence type="ECO:0007744" key="12">
    <source>
    </source>
</evidence>
<evidence type="ECO:0007744" key="13">
    <source>
    </source>
</evidence>
<evidence type="ECO:0007744" key="14">
    <source>
    </source>
</evidence>
<evidence type="ECO:0007744" key="15">
    <source>
    </source>
</evidence>
<evidence type="ECO:0007744" key="16">
    <source>
    </source>
</evidence>
<evidence type="ECO:0007744" key="17">
    <source>
    </source>
</evidence>
<evidence type="ECO:0007744" key="18">
    <source>
    </source>
</evidence>
<evidence type="ECO:0007744" key="19">
    <source>
    </source>
</evidence>
<evidence type="ECO:0007744" key="20">
    <source>
    </source>
</evidence>
<evidence type="ECO:0007744" key="21">
    <source>
    </source>
</evidence>
<proteinExistence type="evidence at protein level"/>
<gene>
    <name type="primary">FKBP15</name>
    <name type="synonym">KIAA0674</name>
</gene>
<reference key="1">
    <citation type="journal article" date="1998" name="DNA Res.">
        <title>Prediction of the coding sequences of unidentified human genes. X. The complete sequences of 100 new cDNA clones from brain which can code for large proteins in vitro.</title>
        <authorList>
            <person name="Ishikawa K."/>
            <person name="Nagase T."/>
            <person name="Suyama M."/>
            <person name="Miyajima N."/>
            <person name="Tanaka A."/>
            <person name="Kotani H."/>
            <person name="Nomura N."/>
            <person name="Ohara O."/>
        </authorList>
    </citation>
    <scope>NUCLEOTIDE SEQUENCE [LARGE SCALE MRNA] (ISOFORM 1)</scope>
    <scope>VARIANT GLN-413</scope>
    <source>
        <tissue>Brain</tissue>
    </source>
</reference>
<reference key="2">
    <citation type="journal article" date="2004" name="Nature">
        <title>DNA sequence and analysis of human chromosome 9.</title>
        <authorList>
            <person name="Humphray S.J."/>
            <person name="Oliver K."/>
            <person name="Hunt A.R."/>
            <person name="Plumb R.W."/>
            <person name="Loveland J.E."/>
            <person name="Howe K.L."/>
            <person name="Andrews T.D."/>
            <person name="Searle S."/>
            <person name="Hunt S.E."/>
            <person name="Scott C.E."/>
            <person name="Jones M.C."/>
            <person name="Ainscough R."/>
            <person name="Almeida J.P."/>
            <person name="Ambrose K.D."/>
            <person name="Ashwell R.I.S."/>
            <person name="Babbage A.K."/>
            <person name="Babbage S."/>
            <person name="Bagguley C.L."/>
            <person name="Bailey J."/>
            <person name="Banerjee R."/>
            <person name="Barker D.J."/>
            <person name="Barlow K.F."/>
            <person name="Bates K."/>
            <person name="Beasley H."/>
            <person name="Beasley O."/>
            <person name="Bird C.P."/>
            <person name="Bray-Allen S."/>
            <person name="Brown A.J."/>
            <person name="Brown J.Y."/>
            <person name="Burford D."/>
            <person name="Burrill W."/>
            <person name="Burton J."/>
            <person name="Carder C."/>
            <person name="Carter N.P."/>
            <person name="Chapman J.C."/>
            <person name="Chen Y."/>
            <person name="Clarke G."/>
            <person name="Clark S.Y."/>
            <person name="Clee C.M."/>
            <person name="Clegg S."/>
            <person name="Collier R.E."/>
            <person name="Corby N."/>
            <person name="Crosier M."/>
            <person name="Cummings A.T."/>
            <person name="Davies J."/>
            <person name="Dhami P."/>
            <person name="Dunn M."/>
            <person name="Dutta I."/>
            <person name="Dyer L.W."/>
            <person name="Earthrowl M.E."/>
            <person name="Faulkner L."/>
            <person name="Fleming C.J."/>
            <person name="Frankish A."/>
            <person name="Frankland J.A."/>
            <person name="French L."/>
            <person name="Fricker D.G."/>
            <person name="Garner P."/>
            <person name="Garnett J."/>
            <person name="Ghori J."/>
            <person name="Gilbert J.G.R."/>
            <person name="Glison C."/>
            <person name="Grafham D.V."/>
            <person name="Gribble S."/>
            <person name="Griffiths C."/>
            <person name="Griffiths-Jones S."/>
            <person name="Grocock R."/>
            <person name="Guy J."/>
            <person name="Hall R.E."/>
            <person name="Hammond S."/>
            <person name="Harley J.L."/>
            <person name="Harrison E.S.I."/>
            <person name="Hart E.A."/>
            <person name="Heath P.D."/>
            <person name="Henderson C.D."/>
            <person name="Hopkins B.L."/>
            <person name="Howard P.J."/>
            <person name="Howden P.J."/>
            <person name="Huckle E."/>
            <person name="Johnson C."/>
            <person name="Johnson D."/>
            <person name="Joy A.A."/>
            <person name="Kay M."/>
            <person name="Keenan S."/>
            <person name="Kershaw J.K."/>
            <person name="Kimberley A.M."/>
            <person name="King A."/>
            <person name="Knights A."/>
            <person name="Laird G.K."/>
            <person name="Langford C."/>
            <person name="Lawlor S."/>
            <person name="Leongamornlert D.A."/>
            <person name="Leversha M."/>
            <person name="Lloyd C."/>
            <person name="Lloyd D.M."/>
            <person name="Lovell J."/>
            <person name="Martin S."/>
            <person name="Mashreghi-Mohammadi M."/>
            <person name="Matthews L."/>
            <person name="McLaren S."/>
            <person name="McLay K.E."/>
            <person name="McMurray A."/>
            <person name="Milne S."/>
            <person name="Nickerson T."/>
            <person name="Nisbett J."/>
            <person name="Nordsiek G."/>
            <person name="Pearce A.V."/>
            <person name="Peck A.I."/>
            <person name="Porter K.M."/>
            <person name="Pandian R."/>
            <person name="Pelan S."/>
            <person name="Phillimore B."/>
            <person name="Povey S."/>
            <person name="Ramsey Y."/>
            <person name="Rand V."/>
            <person name="Scharfe M."/>
            <person name="Sehra H.K."/>
            <person name="Shownkeen R."/>
            <person name="Sims S.K."/>
            <person name="Skuce C.D."/>
            <person name="Smith M."/>
            <person name="Steward C.A."/>
            <person name="Swarbreck D."/>
            <person name="Sycamore N."/>
            <person name="Tester J."/>
            <person name="Thorpe A."/>
            <person name="Tracey A."/>
            <person name="Tromans A."/>
            <person name="Thomas D.W."/>
            <person name="Wall M."/>
            <person name="Wallis J.M."/>
            <person name="West A.P."/>
            <person name="Whitehead S.L."/>
            <person name="Willey D.L."/>
            <person name="Williams S.A."/>
            <person name="Wilming L."/>
            <person name="Wray P.W."/>
            <person name="Young L."/>
            <person name="Ashurst J.L."/>
            <person name="Coulson A."/>
            <person name="Blocker H."/>
            <person name="Durbin R.M."/>
            <person name="Sulston J.E."/>
            <person name="Hubbard T."/>
            <person name="Jackson M.J."/>
            <person name="Bentley D.R."/>
            <person name="Beck S."/>
            <person name="Rogers J."/>
            <person name="Dunham I."/>
        </authorList>
    </citation>
    <scope>NUCLEOTIDE SEQUENCE [LARGE SCALE GENOMIC DNA]</scope>
</reference>
<reference key="3">
    <citation type="journal article" date="2004" name="Genome Res.">
        <title>The status, quality, and expansion of the NIH full-length cDNA project: the Mammalian Gene Collection (MGC).</title>
        <authorList>
            <consortium name="The MGC Project Team"/>
        </authorList>
    </citation>
    <scope>NUCLEOTIDE SEQUENCE [LARGE SCALE MRNA] (ISOFORM 3)</scope>
    <scope>NUCLEOTIDE SEQUENCE [LARGE SCALE MRNA] OF 548-1219 (ISOFORM 2)</scope>
    <scope>VARIANT GLN-413</scope>
    <source>
        <tissue>Eye</tissue>
        <tissue>Prostate</tissue>
    </source>
</reference>
<reference key="4">
    <citation type="journal article" date="2006" name="Cell">
        <title>Global, in vivo, and site-specific phosphorylation dynamics in signaling networks.</title>
        <authorList>
            <person name="Olsen J.V."/>
            <person name="Blagoev B."/>
            <person name="Gnad F."/>
            <person name="Macek B."/>
            <person name="Kumar C."/>
            <person name="Mortensen P."/>
            <person name="Mann M."/>
        </authorList>
    </citation>
    <scope>PHOSPHORYLATION [LARGE SCALE ANALYSIS] AT SER-956</scope>
    <scope>IDENTIFICATION BY MASS SPECTROMETRY [LARGE SCALE ANALYSIS]</scope>
    <source>
        <tissue>Cervix carcinoma</tissue>
    </source>
</reference>
<reference key="5">
    <citation type="journal article" date="2006" name="Nat. Biotechnol.">
        <title>A probability-based approach for high-throughput protein phosphorylation analysis and site localization.</title>
        <authorList>
            <person name="Beausoleil S.A."/>
            <person name="Villen J."/>
            <person name="Gerber S.A."/>
            <person name="Rush J."/>
            <person name="Gygi S.P."/>
        </authorList>
    </citation>
    <scope>PHOSPHORYLATION [LARGE SCALE ANALYSIS] AT SER-1161 AND SER-1162</scope>
    <scope>IDENTIFICATION BY MASS SPECTROMETRY [LARGE SCALE ANALYSIS]</scope>
    <source>
        <tissue>Cervix carcinoma</tissue>
    </source>
</reference>
<reference key="6">
    <citation type="journal article" date="2008" name="Proc. Natl. Acad. Sci. U.S.A.">
        <title>A quantitative atlas of mitotic phosphorylation.</title>
        <authorList>
            <person name="Dephoure N."/>
            <person name="Zhou C."/>
            <person name="Villen J."/>
            <person name="Beausoleil S.A."/>
            <person name="Bakalarski C.E."/>
            <person name="Elledge S.J."/>
            <person name="Gygi S.P."/>
        </authorList>
    </citation>
    <scope>PHOSPHORYLATION [LARGE SCALE ANALYSIS] AT SER-346; SER-356; SER-939; SER-940; SER-941; SER-956; SER-979; SER-1114 AND SER-1164</scope>
    <scope>IDENTIFICATION BY MASS SPECTROMETRY [LARGE SCALE ANALYSIS]</scope>
    <source>
        <tissue>Cervix carcinoma</tissue>
    </source>
</reference>
<reference key="7">
    <citation type="journal article" date="2008" name="Proteomics">
        <title>Large-scale phosphoproteome analysis of human liver tissue by enrichment and fractionation of phosphopeptides with strong anion exchange chromatography.</title>
        <authorList>
            <person name="Han G."/>
            <person name="Ye M."/>
            <person name="Zhou H."/>
            <person name="Jiang X."/>
            <person name="Feng S."/>
            <person name="Jiang X."/>
            <person name="Tian R."/>
            <person name="Wan D."/>
            <person name="Zou H."/>
            <person name="Gu J."/>
        </authorList>
    </citation>
    <scope>IDENTIFICATION BY MASS SPECTROMETRY [LARGE SCALE ANALYSIS]</scope>
    <source>
        <tissue>Liver</tissue>
    </source>
</reference>
<reference key="8">
    <citation type="journal article" date="2009" name="Anal. Chem.">
        <title>Lys-N and trypsin cover complementary parts of the phosphoproteome in a refined SCX-based approach.</title>
        <authorList>
            <person name="Gauci S."/>
            <person name="Helbig A.O."/>
            <person name="Slijper M."/>
            <person name="Krijgsveld J."/>
            <person name="Heck A.J."/>
            <person name="Mohammed S."/>
        </authorList>
    </citation>
    <scope>IDENTIFICATION BY MASS SPECTROMETRY [LARGE SCALE ANALYSIS]</scope>
</reference>
<reference key="9">
    <citation type="journal article" date="2009" name="Exp. Cell Res.">
        <title>WAFL, a new protein involved in regulation of early endocytic transport at the intersection of actin and microtubule dynamics.</title>
        <authorList>
            <person name="Viklund I.-M."/>
            <person name="Aspenstroem P."/>
            <person name="Meas-Yedid V."/>
            <person name="Zhang B."/>
            <person name="Kopec J."/>
            <person name="Agren D."/>
            <person name="Schneider G."/>
            <person name="D'Amato M."/>
            <person name="Olivo-Marin J.-C."/>
            <person name="Sansonetti P."/>
            <person name="Van Nhieu G.T."/>
            <person name="Pettersson S."/>
        </authorList>
    </citation>
    <scope>FUNCTION</scope>
    <scope>SUBCELLULAR LOCATION</scope>
    <scope>INTERACTION WITH ACTIN AND WIP</scope>
</reference>
<reference key="10">
    <citation type="journal article" date="2009" name="Sci. Signal.">
        <title>Quantitative phosphoproteomic analysis of T cell receptor signaling reveals system-wide modulation of protein-protein interactions.</title>
        <authorList>
            <person name="Mayya V."/>
            <person name="Lundgren D.H."/>
            <person name="Hwang S.-I."/>
            <person name="Rezaul K."/>
            <person name="Wu L."/>
            <person name="Eng J.K."/>
            <person name="Rodionov V."/>
            <person name="Han D.K."/>
        </authorList>
    </citation>
    <scope>PHOSPHORYLATION [LARGE SCALE ANALYSIS] AT SER-326; SER-356; SER-1114; SER-1164; SER-1195 AND THR-1203</scope>
    <scope>IDENTIFICATION BY MASS SPECTROMETRY [LARGE SCALE ANALYSIS]</scope>
    <source>
        <tissue>Leukemic T-cell</tissue>
    </source>
</reference>
<reference key="11">
    <citation type="journal article" date="2009" name="Science">
        <title>Lysine acetylation targets protein complexes and co-regulates major cellular functions.</title>
        <authorList>
            <person name="Choudhary C."/>
            <person name="Kumar C."/>
            <person name="Gnad F."/>
            <person name="Nielsen M.L."/>
            <person name="Rehman M."/>
            <person name="Walther T.C."/>
            <person name="Olsen J.V."/>
            <person name="Mann M."/>
        </authorList>
    </citation>
    <scope>ACETYLATION [LARGE SCALE ANALYSIS] AT LYS-92</scope>
    <scope>IDENTIFICATION BY MASS SPECTROMETRY [LARGE SCALE ANALYSIS]</scope>
</reference>
<reference key="12">
    <citation type="journal article" date="2010" name="Sci. Signal.">
        <title>Quantitative phosphoproteomics reveals widespread full phosphorylation site occupancy during mitosis.</title>
        <authorList>
            <person name="Olsen J.V."/>
            <person name="Vermeulen M."/>
            <person name="Santamaria A."/>
            <person name="Kumar C."/>
            <person name="Miller M.L."/>
            <person name="Jensen L.J."/>
            <person name="Gnad F."/>
            <person name="Cox J."/>
            <person name="Jensen T.S."/>
            <person name="Nigg E.A."/>
            <person name="Brunak S."/>
            <person name="Mann M."/>
        </authorList>
    </citation>
    <scope>ACETYLATION [LARGE SCALE ANALYSIS] AT MET-1</scope>
    <scope>PHOSPHORYLATION [LARGE SCALE ANALYSIS] AT SER-14; SER-956; SER-1114 AND SER-1164</scope>
    <scope>IDENTIFICATION BY MASS SPECTROMETRY [LARGE SCALE ANALYSIS]</scope>
    <source>
        <tissue>Cervix carcinoma</tissue>
    </source>
</reference>
<reference key="13">
    <citation type="journal article" date="2011" name="BMC Syst. Biol.">
        <title>Initial characterization of the human central proteome.</title>
        <authorList>
            <person name="Burkard T.R."/>
            <person name="Planyavsky M."/>
            <person name="Kaupe I."/>
            <person name="Breitwieser F.P."/>
            <person name="Buerckstuemmer T."/>
            <person name="Bennett K.L."/>
            <person name="Superti-Furga G."/>
            <person name="Colinge J."/>
        </authorList>
    </citation>
    <scope>IDENTIFICATION BY MASS SPECTROMETRY [LARGE SCALE ANALYSIS]</scope>
</reference>
<reference key="14">
    <citation type="journal article" date="2011" name="Sci. Signal.">
        <title>System-wide temporal characterization of the proteome and phosphoproteome of human embryonic stem cell differentiation.</title>
        <authorList>
            <person name="Rigbolt K.T."/>
            <person name="Prokhorova T.A."/>
            <person name="Akimov V."/>
            <person name="Henningsen J."/>
            <person name="Johansen P.T."/>
            <person name="Kratchmarova I."/>
            <person name="Kassem M."/>
            <person name="Mann M."/>
            <person name="Olsen J.V."/>
            <person name="Blagoev B."/>
        </authorList>
    </citation>
    <scope>PHOSPHORYLATION [LARGE SCALE ANALYSIS] AT SER-1164</scope>
    <scope>IDENTIFICATION BY MASS SPECTROMETRY [LARGE SCALE ANALYSIS]</scope>
</reference>
<reference key="15">
    <citation type="journal article" date="2012" name="Proc. Natl. Acad. Sci. U.S.A.">
        <title>N-terminal acetylome analyses and functional insights of the N-terminal acetyltransferase NatB.</title>
        <authorList>
            <person name="Van Damme P."/>
            <person name="Lasa M."/>
            <person name="Polevoda B."/>
            <person name="Gazquez C."/>
            <person name="Elosegui-Artola A."/>
            <person name="Kim D.S."/>
            <person name="De Juan-Pardo E."/>
            <person name="Demeyer K."/>
            <person name="Hole K."/>
            <person name="Larrea E."/>
            <person name="Timmerman E."/>
            <person name="Prieto J."/>
            <person name="Arnesen T."/>
            <person name="Sherman F."/>
            <person name="Gevaert K."/>
            <person name="Aldabe R."/>
        </authorList>
    </citation>
    <scope>ACETYLATION [LARGE SCALE ANALYSIS] AT MET-1</scope>
    <scope>IDENTIFICATION BY MASS SPECTROMETRY [LARGE SCALE ANALYSIS]</scope>
</reference>
<reference key="16">
    <citation type="journal article" date="2013" name="J. Proteome Res.">
        <title>Toward a comprehensive characterization of a human cancer cell phosphoproteome.</title>
        <authorList>
            <person name="Zhou H."/>
            <person name="Di Palma S."/>
            <person name="Preisinger C."/>
            <person name="Peng M."/>
            <person name="Polat A.N."/>
            <person name="Heck A.J."/>
            <person name="Mohammed S."/>
        </authorList>
    </citation>
    <scope>PHOSPHORYLATION [LARGE SCALE ANALYSIS] AT SER-344; SER-346; SER-356; SER-956; SER-1114; SER-1162 AND SER-1164</scope>
    <scope>IDENTIFICATION BY MASS SPECTROMETRY [LARGE SCALE ANALYSIS]</scope>
    <source>
        <tissue>Cervix carcinoma</tissue>
        <tissue>Erythroleukemia</tissue>
    </source>
</reference>
<reference key="17">
    <citation type="journal article" date="2014" name="J. Proteomics">
        <title>An enzyme assisted RP-RPLC approach for in-depth analysis of human liver phosphoproteome.</title>
        <authorList>
            <person name="Bian Y."/>
            <person name="Song C."/>
            <person name="Cheng K."/>
            <person name="Dong M."/>
            <person name="Wang F."/>
            <person name="Huang J."/>
            <person name="Sun D."/>
            <person name="Wang L."/>
            <person name="Ye M."/>
            <person name="Zou H."/>
        </authorList>
    </citation>
    <scope>PHOSPHORYLATION [LARGE SCALE ANALYSIS] AT SER-23; SER-956; SER-979; SER-1024; SER-1061; SER-1065; SER-1097; THR-1099; SER-1114 AND SER-1158</scope>
    <scope>IDENTIFICATION BY MASS SPECTROMETRY [LARGE SCALE ANALYSIS]</scope>
    <source>
        <tissue>Liver</tissue>
    </source>
</reference>
<reference key="18">
    <citation type="journal article" date="2015" name="Proteomics">
        <title>N-terminome analysis of the human mitochondrial proteome.</title>
        <authorList>
            <person name="Vaca Jacome A.S."/>
            <person name="Rabilloud T."/>
            <person name="Schaeffer-Reiss C."/>
            <person name="Rompais M."/>
            <person name="Ayoub D."/>
            <person name="Lane L."/>
            <person name="Bairoch A."/>
            <person name="Van Dorsselaer A."/>
            <person name="Carapito C."/>
        </authorList>
    </citation>
    <scope>IDENTIFICATION BY MASS SPECTROMETRY [LARGE SCALE ANALYSIS]</scope>
</reference>
<reference key="19">
    <citation type="journal article" date="2017" name="Nat. Cell Biol.">
        <title>TBC1D23 is a bridging factor for endosomal vesicle capture by golgins at the trans-Golgi.</title>
        <authorList>
            <person name="Shin J.J.H."/>
            <person name="Gillingham A.K."/>
            <person name="Begum F."/>
            <person name="Chadwick J."/>
            <person name="Munro S."/>
        </authorList>
    </citation>
    <scope>INTERACTION WITH TBC1D23</scope>
</reference>
<accession>Q5T1M5</accession>
<accession>Q05DK8</accession>
<accession>Q5T1M2</accession>
<accession>Q6DD85</accession>
<accession>Q9Y4D0</accession>
<name>FKB15_HUMAN</name>
<protein>
    <recommendedName>
        <fullName>FK506-binding protein 15</fullName>
        <shortName>FKBP-15</shortName>
    </recommendedName>
    <alternativeName>
        <fullName>133 kDa FK506-binding protein</fullName>
        <shortName>133 kDa FKBP</shortName>
        <shortName>FKBP-133</shortName>
    </alternativeName>
    <alternativeName>
        <fullName>WASP- and FKBP-like protein</fullName>
        <shortName>WAFL</shortName>
    </alternativeName>
</protein>
<sequence>MFGAGDEDDTDFLSPSGGARLASLFGLDQAAAGHGNEFFQYTAPKQPKKGQGTAATGNQATPKTAPATMSTPTILVATAVHAYRYTNGQYVKQGKFGAAVLGNHTAREYRILLYISQQQPVTVARIHVNFELMVRPNNYSTFYDDQRQNWSIMFESEKAAVEFNKQVCIAKCNSTSSLDAVLSQDLIVADGPAVEVGDSLEVAYTGWLFQNHVLGQVFDSTANKDKLLRLKLGSGKVIKGWEDGMLGMKKGGKRLLIVPPACAVGSEGVIGWTQATDSILVFEVEVRRVKFARDSGSDGHSVSSRDSAAPSPIPGADNLSADPVVSPPTSIPFKSGEPALRTKSNSLSEQLAINTSPDAVKAKLISRMAKMGQPMLPILPPQLDSNDSEIEDVNTLQGGGQPVVTPSVQPSLHPAHPALPQMTSQAPQPSVTGLQAPSAALMQVSSLDSHSAVSGNAQSFQPYAGMQAYAYPQASAVTSQLQPVRPLYPAPLSQPPHFQGSGDMASFLMTEARQHNTEIRMAVSKVADKMDHLMTKVEELQKHSAGNSMLIPSMSVTMETSMIMSNIQRIIQENERLKQEILEKSNRIEEQNDKISELIERNQRYVEQSNLMMEKRNNSLQTATENTQARVLHAEQEKAKVTEELAAATAQVSHLQLKMTAHQKKETELQMQLTESLKETDLLRGQLTKVQAKLSELQETSEQAQSKFKSEKQNRKQLELKVTSLEEELTDLRVEKESLEKNLSERKKKSAQERSQAEEEIDEIRKSYQEELDKLRQLLKKTRVSTDQAAAEQLSLVQAELQTQWEAKCEHLLASAKDEHLQQYQEVCAQRDAYQQKLVQLQEKCLALQAQITALTKQNEQHIKELEKNKSQMSGVEAAASDPSEKVKKIMNQVFQSLRREFELEESYNGRTILGTIMNTIKMVTLQLLNQQEQEKEESSSEEEEEKAEERPRRPSQEQSASASSGQPQAPLNRERPESPMVPSEQVVEEAVPLPPQALTTSQDGHRRKGDSEAEALSEIKDGSLPPELSCIPSHRVLGPPTSIPPEPLGPVSMDSECEESLAASPMAAKPDNPSGKVCVREVAPDGPLQESSTRLSLTSDPEEGDPLALGPESPGEPQPPQLKKDDVTSSTGPHKELSSTEAGSTVAGAALRPSHHSQRSSLSGDEEDELFKGATLKALRPKAQPEEEDEDEVSMKGRPPPTPLFGDDDDDDDIDWLG</sequence>